<accession>Q3SS86</accession>
<evidence type="ECO:0000255" key="1">
    <source>
        <dbReference type="HAMAP-Rule" id="MF_00347"/>
    </source>
</evidence>
<evidence type="ECO:0000256" key="2">
    <source>
        <dbReference type="SAM" id="MobiDB-lite"/>
    </source>
</evidence>
<organism>
    <name type="scientific">Nitrobacter winogradskyi (strain ATCC 25391 / DSM 10237 / CIP 104748 / NCIMB 11846 / Nb-255)</name>
    <dbReference type="NCBI Taxonomy" id="323098"/>
    <lineage>
        <taxon>Bacteria</taxon>
        <taxon>Pseudomonadati</taxon>
        <taxon>Pseudomonadota</taxon>
        <taxon>Alphaproteobacteria</taxon>
        <taxon>Hyphomicrobiales</taxon>
        <taxon>Nitrobacteraceae</taxon>
        <taxon>Nitrobacter</taxon>
    </lineage>
</organism>
<keyword id="KW-0067">ATP-binding</keyword>
<keyword id="KW-0418">Kinase</keyword>
<keyword id="KW-0460">Magnesium</keyword>
<keyword id="KW-0479">Metal-binding</keyword>
<keyword id="KW-0547">Nucleotide-binding</keyword>
<keyword id="KW-0597">Phosphoprotein</keyword>
<keyword id="KW-1185">Reference proteome</keyword>
<keyword id="KW-0808">Transferase</keyword>
<gene>
    <name evidence="1" type="primary">ppk</name>
    <name type="ordered locus">Nwi_1594</name>
</gene>
<sequence length="733" mass="82103">MDSIQAIAPEEKKPELELDSAIRASPERFINRELSWLHFNRRVLEESVNPGHPALERVRFLSISANNLDEFFMVRVAGIKAQVREGITERSPDGLTPSEQLVLINETVSDLASDQQAIWRDLRNMLAGVGIVLIDGKDVTKAERSWIADHFLHNIFPLLTPLAIDPAHPFPFIPSLGFTIALQLARTSDGKPMNALIRMPGKIDRFLRIPAASKDDPVRLITIEGATSLFINRLFPGYTVKGQGAFRIIRDSELEIEEEAEDLVRLFETALKRRRRGSVIRLEIEAAMPAELRAFVQRALSAADDEVLLVDGVLAMNELSQLTRLDRPDLEFVPYVPRHPERVRDHGGDVFAAIRQKDLIVHHPYESFDVVVQFLQQAARDPDVVAIKQTLYRTSNNSPIVRALAEAAEAGKSVTALIELKARFDEEANIRWARDLERAGVQVVYGFLELKTHAKLSLVVRREGGSLATYVHTGTGNYHPVTARIYTDLSYFTSDPIIGRDAARVFNYITGYAEPSDIERMAVSPLTLRNRILDHIRGETTFARNGKPAAVWMKMNALVDPDIIDALYEASQAGVSVELIVRGICCLRPGVPGLSENIRVKSVIGRFLEHGRIYCFGMGQTMPGPKAAVYISSADMMPRNLDRRVEVLCPLQNATVHQQVLEQIMVANLKDTEQSWRLLPDGSSTRMKAAKGEEPFNLHNYFMTNPSLSGRGKSLKESSPRRLTRRSERQPPA</sequence>
<reference key="1">
    <citation type="journal article" date="2006" name="Appl. Environ. Microbiol.">
        <title>Genome sequence of the chemolithoautotrophic nitrite-oxidizing bacterium Nitrobacter winogradskyi Nb-255.</title>
        <authorList>
            <person name="Starkenburg S.R."/>
            <person name="Chain P.S.G."/>
            <person name="Sayavedra-Soto L.A."/>
            <person name="Hauser L."/>
            <person name="Land M.L."/>
            <person name="Larimer F.W."/>
            <person name="Malfatti S.A."/>
            <person name="Klotz M.G."/>
            <person name="Bottomley P.J."/>
            <person name="Arp D.J."/>
            <person name="Hickey W.J."/>
        </authorList>
    </citation>
    <scope>NUCLEOTIDE SEQUENCE [LARGE SCALE GENOMIC DNA]</scope>
    <source>
        <strain>ATCC 25391 / DSM 10237 / CIP 104748 / NCIMB 11846 / Nb-255</strain>
    </source>
</reference>
<name>PPK1_NITWN</name>
<dbReference type="EC" id="2.7.4.1" evidence="1"/>
<dbReference type="EMBL" id="CP000115">
    <property type="protein sequence ID" value="ABA04855.1"/>
    <property type="molecule type" value="Genomic_DNA"/>
</dbReference>
<dbReference type="RefSeq" id="WP_011314859.1">
    <property type="nucleotide sequence ID" value="NC_007406.1"/>
</dbReference>
<dbReference type="SMR" id="Q3SS86"/>
<dbReference type="STRING" id="323098.Nwi_1594"/>
<dbReference type="KEGG" id="nwi:Nwi_1594"/>
<dbReference type="eggNOG" id="COG0855">
    <property type="taxonomic scope" value="Bacteria"/>
</dbReference>
<dbReference type="HOGENOM" id="CLU_009678_5_0_5"/>
<dbReference type="OrthoDB" id="9761456at2"/>
<dbReference type="Proteomes" id="UP000002531">
    <property type="component" value="Chromosome"/>
</dbReference>
<dbReference type="GO" id="GO:0009358">
    <property type="term" value="C:polyphosphate kinase complex"/>
    <property type="evidence" value="ECO:0007669"/>
    <property type="project" value="InterPro"/>
</dbReference>
<dbReference type="GO" id="GO:0005524">
    <property type="term" value="F:ATP binding"/>
    <property type="evidence" value="ECO:0007669"/>
    <property type="project" value="UniProtKB-KW"/>
</dbReference>
<dbReference type="GO" id="GO:0046872">
    <property type="term" value="F:metal ion binding"/>
    <property type="evidence" value="ECO:0007669"/>
    <property type="project" value="UniProtKB-KW"/>
</dbReference>
<dbReference type="GO" id="GO:0008976">
    <property type="term" value="F:polyphosphate kinase activity"/>
    <property type="evidence" value="ECO:0007669"/>
    <property type="project" value="UniProtKB-UniRule"/>
</dbReference>
<dbReference type="GO" id="GO:0006799">
    <property type="term" value="P:polyphosphate biosynthetic process"/>
    <property type="evidence" value="ECO:0007669"/>
    <property type="project" value="UniProtKB-UniRule"/>
</dbReference>
<dbReference type="CDD" id="cd09165">
    <property type="entry name" value="PLDc_PaPPK1_C1_like"/>
    <property type="match status" value="1"/>
</dbReference>
<dbReference type="CDD" id="cd09168">
    <property type="entry name" value="PLDc_PaPPK1_C2_like"/>
    <property type="match status" value="1"/>
</dbReference>
<dbReference type="Gene3D" id="3.30.870.10">
    <property type="entry name" value="Endonuclease Chain A"/>
    <property type="match status" value="2"/>
</dbReference>
<dbReference type="Gene3D" id="3.30.1840.10">
    <property type="entry name" value="Polyphosphate kinase middle domain"/>
    <property type="match status" value="1"/>
</dbReference>
<dbReference type="Gene3D" id="1.20.58.310">
    <property type="entry name" value="Polyphosphate kinase N-terminal domain"/>
    <property type="match status" value="1"/>
</dbReference>
<dbReference type="HAMAP" id="MF_00347">
    <property type="entry name" value="Polyphosphate_kinase"/>
    <property type="match status" value="1"/>
</dbReference>
<dbReference type="InterPro" id="IPR003414">
    <property type="entry name" value="PP_kinase"/>
</dbReference>
<dbReference type="InterPro" id="IPR041108">
    <property type="entry name" value="PP_kinase_C_1"/>
</dbReference>
<dbReference type="InterPro" id="IPR024953">
    <property type="entry name" value="PP_kinase_middle"/>
</dbReference>
<dbReference type="InterPro" id="IPR036830">
    <property type="entry name" value="PP_kinase_middle_dom_sf"/>
</dbReference>
<dbReference type="InterPro" id="IPR025200">
    <property type="entry name" value="PPK_C_dom2"/>
</dbReference>
<dbReference type="InterPro" id="IPR025198">
    <property type="entry name" value="PPK_N_dom"/>
</dbReference>
<dbReference type="InterPro" id="IPR036832">
    <property type="entry name" value="PPK_N_dom_sf"/>
</dbReference>
<dbReference type="NCBIfam" id="TIGR03705">
    <property type="entry name" value="poly_P_kin"/>
    <property type="match status" value="1"/>
</dbReference>
<dbReference type="NCBIfam" id="NF003917">
    <property type="entry name" value="PRK05443.1-1"/>
    <property type="match status" value="1"/>
</dbReference>
<dbReference type="NCBIfam" id="NF003918">
    <property type="entry name" value="PRK05443.1-2"/>
    <property type="match status" value="1"/>
</dbReference>
<dbReference type="NCBIfam" id="NF003919">
    <property type="entry name" value="PRK05443.1-4"/>
    <property type="match status" value="1"/>
</dbReference>
<dbReference type="NCBIfam" id="NF003921">
    <property type="entry name" value="PRK05443.2-2"/>
    <property type="match status" value="1"/>
</dbReference>
<dbReference type="PANTHER" id="PTHR30218">
    <property type="entry name" value="POLYPHOSPHATE KINASE"/>
    <property type="match status" value="1"/>
</dbReference>
<dbReference type="PANTHER" id="PTHR30218:SF0">
    <property type="entry name" value="POLYPHOSPHATE KINASE"/>
    <property type="match status" value="1"/>
</dbReference>
<dbReference type="Pfam" id="PF02503">
    <property type="entry name" value="PP_kinase"/>
    <property type="match status" value="1"/>
</dbReference>
<dbReference type="Pfam" id="PF13090">
    <property type="entry name" value="PP_kinase_C"/>
    <property type="match status" value="1"/>
</dbReference>
<dbReference type="Pfam" id="PF17941">
    <property type="entry name" value="PP_kinase_C_1"/>
    <property type="match status" value="1"/>
</dbReference>
<dbReference type="Pfam" id="PF13089">
    <property type="entry name" value="PP_kinase_N"/>
    <property type="match status" value="1"/>
</dbReference>
<dbReference type="PIRSF" id="PIRSF015589">
    <property type="entry name" value="PP_kinase"/>
    <property type="match status" value="1"/>
</dbReference>
<dbReference type="SUPFAM" id="SSF56024">
    <property type="entry name" value="Phospholipase D/nuclease"/>
    <property type="match status" value="2"/>
</dbReference>
<dbReference type="SUPFAM" id="SSF143724">
    <property type="entry name" value="PHP14-like"/>
    <property type="match status" value="1"/>
</dbReference>
<dbReference type="SUPFAM" id="SSF140356">
    <property type="entry name" value="PPK N-terminal domain-like"/>
    <property type="match status" value="1"/>
</dbReference>
<feature type="chain" id="PRO_1000120504" description="Polyphosphate kinase">
    <location>
        <begin position="1"/>
        <end position="733"/>
    </location>
</feature>
<feature type="region of interest" description="Disordered" evidence="2">
    <location>
        <begin position="703"/>
        <end position="733"/>
    </location>
</feature>
<feature type="compositionally biased region" description="Basic and acidic residues" evidence="2">
    <location>
        <begin position="714"/>
        <end position="733"/>
    </location>
</feature>
<feature type="active site" description="Phosphohistidine intermediate" evidence="1">
    <location>
        <position position="453"/>
    </location>
</feature>
<feature type="binding site" evidence="1">
    <location>
        <position position="67"/>
    </location>
    <ligand>
        <name>ATP</name>
        <dbReference type="ChEBI" id="CHEBI:30616"/>
    </ligand>
</feature>
<feature type="binding site" evidence="1">
    <location>
        <position position="393"/>
    </location>
    <ligand>
        <name>Mg(2+)</name>
        <dbReference type="ChEBI" id="CHEBI:18420"/>
    </ligand>
</feature>
<feature type="binding site" evidence="1">
    <location>
        <position position="423"/>
    </location>
    <ligand>
        <name>Mg(2+)</name>
        <dbReference type="ChEBI" id="CHEBI:18420"/>
    </ligand>
</feature>
<feature type="binding site" evidence="1">
    <location>
        <position position="486"/>
    </location>
    <ligand>
        <name>ATP</name>
        <dbReference type="ChEBI" id="CHEBI:30616"/>
    </ligand>
</feature>
<feature type="binding site" evidence="1">
    <location>
        <position position="582"/>
    </location>
    <ligand>
        <name>ATP</name>
        <dbReference type="ChEBI" id="CHEBI:30616"/>
    </ligand>
</feature>
<feature type="binding site" evidence="1">
    <location>
        <position position="610"/>
    </location>
    <ligand>
        <name>ATP</name>
        <dbReference type="ChEBI" id="CHEBI:30616"/>
    </ligand>
</feature>
<comment type="function">
    <text evidence="1">Catalyzes the reversible transfer of the terminal phosphate of ATP to form a long-chain polyphosphate (polyP).</text>
</comment>
<comment type="catalytic activity">
    <reaction evidence="1">
        <text>[phosphate](n) + ATP = [phosphate](n+1) + ADP</text>
        <dbReference type="Rhea" id="RHEA:19573"/>
        <dbReference type="Rhea" id="RHEA-COMP:9859"/>
        <dbReference type="Rhea" id="RHEA-COMP:14280"/>
        <dbReference type="ChEBI" id="CHEBI:16838"/>
        <dbReference type="ChEBI" id="CHEBI:30616"/>
        <dbReference type="ChEBI" id="CHEBI:456216"/>
        <dbReference type="EC" id="2.7.4.1"/>
    </reaction>
</comment>
<comment type="cofactor">
    <cofactor evidence="1">
        <name>Mg(2+)</name>
        <dbReference type="ChEBI" id="CHEBI:18420"/>
    </cofactor>
</comment>
<comment type="PTM">
    <text evidence="1">An intermediate of this reaction is the autophosphorylated ppk in which a phosphate is covalently linked to a histidine residue through a N-P bond.</text>
</comment>
<comment type="similarity">
    <text evidence="1">Belongs to the polyphosphate kinase 1 (PPK1) family.</text>
</comment>
<proteinExistence type="inferred from homology"/>
<protein>
    <recommendedName>
        <fullName evidence="1">Polyphosphate kinase</fullName>
        <ecNumber evidence="1">2.7.4.1</ecNumber>
    </recommendedName>
    <alternativeName>
        <fullName evidence="1">ATP-polyphosphate phosphotransferase</fullName>
    </alternativeName>
    <alternativeName>
        <fullName evidence="1">Polyphosphoric acid kinase</fullName>
    </alternativeName>
</protein>